<gene>
    <name evidence="9" type="primary">phomO'</name>
    <name evidence="8" type="synonym">Phomo</name>
</gene>
<comment type="function">
    <text evidence="6 7">ABC-type transporter; part of the gene cluster that mediates the biosynthesis of the phomopsins, a group of hexapeptide mycotoxins which infects lupins and causes lupinosis disease in livestock.</text>
</comment>
<comment type="subcellular location">
    <subcellularLocation>
        <location evidence="1">Membrane</location>
        <topology evidence="1">Multi-pass membrane protein</topology>
    </subcellularLocation>
</comment>
<comment type="similarity">
    <text evidence="10">Belongs to the ABC transporter superfamily. ABCC family. Conjugate transporter (TC 3.A.1.208) subfamily.</text>
</comment>
<reference key="1">
    <citation type="journal article" date="2016" name="Proc. Natl. Acad. Sci. U.S.A.">
        <title>Biosynthetic investigation of phomopsins reveals a widespread pathway for ribosomal natural products in Ascomycetes.</title>
        <authorList>
            <person name="Ding W."/>
            <person name="Liu W.Q."/>
            <person name="Jia Y."/>
            <person name="Li Y."/>
            <person name="van der Donk W.A."/>
            <person name="Zhang Q."/>
        </authorList>
    </citation>
    <scope>NUCLEOTIDE SEQUENCE [GENOMIC DNA]</scope>
    <scope>FUNCTION</scope>
    <source>
        <strain>ATCC 26115 / IMI 115107 / C 1557</strain>
    </source>
</reference>
<reference key="2">
    <citation type="journal article" date="2021" name="Angew. Chem. Int. Ed.">
        <title>Biosynthetic studies of phomopsins unveil posttranslational installation of dehydroamino acids by ustYa family proteins.</title>
        <authorList>
            <person name="Sogahata K."/>
            <person name="Ozaki T."/>
            <person name="Igarashi Y."/>
            <person name="Naganuma Y."/>
            <person name="Liu C."/>
            <person name="Minami A."/>
            <person name="Oikawa H."/>
        </authorList>
    </citation>
    <scope>NOMENCLATURE</scope>
    <scope>FUNCTION</scope>
    <source>
        <strain>ATCC 26115 / IMI 115107 / C 1557</strain>
    </source>
</reference>
<sequence>MASSAPSSSSCTFQAESSFGPAVASCRRAFDFTLYFEEVVFVLVPSCVFILLAATRLLFILRRARRFTTATAATTTSTDTSSSHSCGNAAQNQHTPIGHGLAHHHILQQCTAGLLVTLHVAGLILLCTTVPSRQRTDLSVPASVVAALAFGVVPVLAHFEHKRRRPSSGPRSSSLLVGLFLCVAVLLRAPLVRTHAALYGSGSALVAVEIASLVLQLVLIAVGEVSSWAADATSNFSPEESAGFLGRSFGSWLWGTFVTGYRTTLSLDSLVPIDSSLESRIVATSFDHILPVSPSGKPGKNGQYRLLLALFRSLGLYALAPVIPRLCLAGFTLAQPFLASATINYIGNGPAPDRDGYGLIGATFLIYTGIAVSTGWYWSLSYKNVTKIRGGLVDGVSQKMLRLSQQHGTESKVLTMMINDVYRITSTLAYAHELWVAPIETAIGTWMLCRHVGPPGLVVLGIIGVCLGTSTYVGKHMAIQQGVWLAAVERRIGATKKMLASIKAIKMMGAGPSVAEALERLRRLEFAASRKFRALIVGTLLSSYSTATLAPVLVFGTYIGATTAAADFSASTLFTSLIWISLLASPLIQLLQIIPSFGAALGSLERIDAFFEKQEFTDERDEATAVDSSCSEKGEKKKEHVSLSIHNSSFSYTDDSEDPILKDVNLVINRGQHVVVTGPAGCGKSLLLQAILGEVAPQNSGSRVCVDGKVAFCSQTPWLENLSARQVVSRFSRDKDPSWTDRVVDACELREFLEAQDPDATIGSQGSMLSGGERQRLALARAIQSRPDILLLDDVLSPIDYVTKKRILRQLFGKSGILHETGTTVVQVTQDHAVAQLADIVLRLDETGALRPYQFPPSQADVEDENGDVDNGAENTRPRESSHTTEAQSGPPEPKSKPTEITDRKVYATYFESIGFLNLVLFIGGGIIFAFCLKFPNVWVGWWTADSSDPDEASHNIGYWFGIYAMLNVLPLIAVAGWVAQLMMLIVPLSGSKLHRKLVDTVSKATFSFISRVDTGSLLNRFNQDLMFVDSRLPLDLFNTAAALLTGIAQVILIGVSAVYVLASIPVLAAVLFLLQHFYLRTSKQLRHLDLQSKAELHTRLSESYQGLATIRAARWQRQVHAEFQAGLDRSQAPVYLLWMVQTWLKLVLNLVVAGLALVVMGAAVGLHQHGSSSGASASASGIGIAFLNLTTLGETMTNLLTAWTSLETTLGAIARIVSFSRDTPAERDVLVRPDSLDHGGGGGGDRAEPPESWPESGGIKLEGVWATYDDDDESDENTDDSGGRPATDVAADGEKHEATTITTTSSTMTTTHYALKDISLEVRPGERVAVCGRTGSGKSTLLLALLGLVAVRRGRISIDGRDVAGVPRARLRGAVHVIPQDPFISVASGNGETIREALDPAGKLGDEEVTDVLQDCGVLDKIVGAGGLAASVSDEALSLSAGERQLFVLARLICRAGGRCRHGGGGILLLDEATSSLDVNTDGKTAEVLRKWLPNMTVLSVLHRLEAALKYDRVVVLEGGRVAHVVTPSESTVSSDIFAFFGRSRSFLESRETGGVSWLE</sequence>
<protein>
    <recommendedName>
        <fullName evidence="9">ABC-type transporter phomO'</fullName>
    </recommendedName>
    <alternativeName>
        <fullName evidence="9">Phomopsin biosynthesis cluster protein O'</fullName>
    </alternativeName>
</protein>
<name>PHOO2_DIALO</name>
<dbReference type="EMBL" id="KU645836">
    <property type="protein sequence ID" value="AMR44284.1"/>
    <property type="molecule type" value="Genomic_DNA"/>
</dbReference>
<dbReference type="SMR" id="A0A142I732"/>
<dbReference type="GO" id="GO:0016020">
    <property type="term" value="C:membrane"/>
    <property type="evidence" value="ECO:0007669"/>
    <property type="project" value="UniProtKB-SubCell"/>
</dbReference>
<dbReference type="GO" id="GO:0140359">
    <property type="term" value="F:ABC-type transporter activity"/>
    <property type="evidence" value="ECO:0007669"/>
    <property type="project" value="InterPro"/>
</dbReference>
<dbReference type="GO" id="GO:0005524">
    <property type="term" value="F:ATP binding"/>
    <property type="evidence" value="ECO:0007669"/>
    <property type="project" value="UniProtKB-KW"/>
</dbReference>
<dbReference type="GO" id="GO:0016887">
    <property type="term" value="F:ATP hydrolysis activity"/>
    <property type="evidence" value="ECO:0007669"/>
    <property type="project" value="InterPro"/>
</dbReference>
<dbReference type="CDD" id="cd18579">
    <property type="entry name" value="ABC_6TM_ABCC_D1"/>
    <property type="match status" value="1"/>
</dbReference>
<dbReference type="CDD" id="cd18580">
    <property type="entry name" value="ABC_6TM_ABCC_D2"/>
    <property type="match status" value="1"/>
</dbReference>
<dbReference type="FunFam" id="1.20.1560.10:FF:000055">
    <property type="entry name" value="ABC multidrug transporter (Eurofung)"/>
    <property type="match status" value="1"/>
</dbReference>
<dbReference type="FunFam" id="1.20.1560.10:FF:000066">
    <property type="entry name" value="ABC multidrug transporter (Eurofung)"/>
    <property type="match status" value="1"/>
</dbReference>
<dbReference type="Gene3D" id="1.20.1560.10">
    <property type="entry name" value="ABC transporter type 1, transmembrane domain"/>
    <property type="match status" value="2"/>
</dbReference>
<dbReference type="Gene3D" id="3.40.50.300">
    <property type="entry name" value="P-loop containing nucleotide triphosphate hydrolases"/>
    <property type="match status" value="2"/>
</dbReference>
<dbReference type="InterPro" id="IPR003593">
    <property type="entry name" value="AAA+_ATPase"/>
</dbReference>
<dbReference type="InterPro" id="IPR011527">
    <property type="entry name" value="ABC1_TM_dom"/>
</dbReference>
<dbReference type="InterPro" id="IPR036640">
    <property type="entry name" value="ABC1_TM_sf"/>
</dbReference>
<dbReference type="InterPro" id="IPR003439">
    <property type="entry name" value="ABC_transporter-like_ATP-bd"/>
</dbReference>
<dbReference type="InterPro" id="IPR017871">
    <property type="entry name" value="ABC_transporter-like_CS"/>
</dbReference>
<dbReference type="InterPro" id="IPR050173">
    <property type="entry name" value="ABC_transporter_C-like"/>
</dbReference>
<dbReference type="InterPro" id="IPR044746">
    <property type="entry name" value="ABCC_6TM_D1"/>
</dbReference>
<dbReference type="InterPro" id="IPR044726">
    <property type="entry name" value="ABCC_6TM_D2"/>
</dbReference>
<dbReference type="InterPro" id="IPR027417">
    <property type="entry name" value="P-loop_NTPase"/>
</dbReference>
<dbReference type="PANTHER" id="PTHR24223:SF399">
    <property type="entry name" value="ABC TRANSPORTER ATNG"/>
    <property type="match status" value="1"/>
</dbReference>
<dbReference type="PANTHER" id="PTHR24223">
    <property type="entry name" value="ATP-BINDING CASSETTE SUB-FAMILY C"/>
    <property type="match status" value="1"/>
</dbReference>
<dbReference type="Pfam" id="PF00664">
    <property type="entry name" value="ABC_membrane"/>
    <property type="match status" value="2"/>
</dbReference>
<dbReference type="Pfam" id="PF00005">
    <property type="entry name" value="ABC_tran"/>
    <property type="match status" value="2"/>
</dbReference>
<dbReference type="SMART" id="SM00382">
    <property type="entry name" value="AAA"/>
    <property type="match status" value="2"/>
</dbReference>
<dbReference type="SUPFAM" id="SSF90123">
    <property type="entry name" value="ABC transporter transmembrane region"/>
    <property type="match status" value="2"/>
</dbReference>
<dbReference type="SUPFAM" id="SSF52540">
    <property type="entry name" value="P-loop containing nucleoside triphosphate hydrolases"/>
    <property type="match status" value="2"/>
</dbReference>
<dbReference type="PROSITE" id="PS50929">
    <property type="entry name" value="ABC_TM1F"/>
    <property type="match status" value="2"/>
</dbReference>
<dbReference type="PROSITE" id="PS00211">
    <property type="entry name" value="ABC_TRANSPORTER_1"/>
    <property type="match status" value="2"/>
</dbReference>
<dbReference type="PROSITE" id="PS50893">
    <property type="entry name" value="ABC_TRANSPORTER_2"/>
    <property type="match status" value="2"/>
</dbReference>
<proteinExistence type="inferred from homology"/>
<keyword id="KW-0067">ATP-binding</keyword>
<keyword id="KW-0325">Glycoprotein</keyword>
<keyword id="KW-0472">Membrane</keyword>
<keyword id="KW-0547">Nucleotide-binding</keyword>
<keyword id="KW-0677">Repeat</keyword>
<keyword id="KW-0812">Transmembrane</keyword>
<keyword id="KW-1133">Transmembrane helix</keyword>
<keyword id="KW-0813">Transport</keyword>
<keyword id="KW-0843">Virulence</keyword>
<organism>
    <name type="scientific">Diaporthe leptostromiformis</name>
    <name type="common">Lupinosis disease fungus</name>
    <name type="synonym">Phomopsis leptostromiformis</name>
    <dbReference type="NCBI Taxonomy" id="291059"/>
    <lineage>
        <taxon>Eukaryota</taxon>
        <taxon>Fungi</taxon>
        <taxon>Dikarya</taxon>
        <taxon>Ascomycota</taxon>
        <taxon>Pezizomycotina</taxon>
        <taxon>Sordariomycetes</taxon>
        <taxon>Sordariomycetidae</taxon>
        <taxon>Diaporthales</taxon>
        <taxon>Diaporthaceae</taxon>
        <taxon>Diaporthe</taxon>
    </lineage>
</organism>
<feature type="chain" id="PRO_0000458386" description="ABC-type transporter phomO'">
    <location>
        <begin position="1"/>
        <end position="1561"/>
    </location>
</feature>
<feature type="transmembrane region" description="Helical" evidence="1">
    <location>
        <begin position="34"/>
        <end position="54"/>
    </location>
</feature>
<feature type="transmembrane region" description="Helical" evidence="1">
    <location>
        <begin position="110"/>
        <end position="130"/>
    </location>
</feature>
<feature type="transmembrane region" description="Helical" evidence="1">
    <location>
        <begin position="139"/>
        <end position="159"/>
    </location>
</feature>
<feature type="transmembrane region" description="Helical" evidence="1">
    <location>
        <begin position="172"/>
        <end position="192"/>
    </location>
</feature>
<feature type="transmembrane region" description="Helical" evidence="1">
    <location>
        <begin position="202"/>
        <end position="222"/>
    </location>
</feature>
<feature type="transmembrane region" description="Helical" evidence="1">
    <location>
        <begin position="314"/>
        <end position="334"/>
    </location>
</feature>
<feature type="transmembrane region" description="Helical" evidence="1 3">
    <location>
        <begin position="358"/>
        <end position="378"/>
    </location>
</feature>
<feature type="transmembrane region" description="Helical" evidence="1 3">
    <location>
        <begin position="428"/>
        <end position="448"/>
    </location>
</feature>
<feature type="transmembrane region" description="Helical" evidence="1 3">
    <location>
        <begin position="452"/>
        <end position="472"/>
    </location>
</feature>
<feature type="transmembrane region" description="Helical" evidence="1 3">
    <location>
        <begin position="535"/>
        <end position="555"/>
    </location>
</feature>
<feature type="transmembrane region" description="Helical" evidence="1 3">
    <location>
        <begin position="577"/>
        <end position="597"/>
    </location>
</feature>
<feature type="transmembrane region" description="Helical" evidence="1 3">
    <location>
        <begin position="913"/>
        <end position="933"/>
    </location>
</feature>
<feature type="transmembrane region" description="Helical" evidence="1 3">
    <location>
        <begin position="969"/>
        <end position="989"/>
    </location>
</feature>
<feature type="transmembrane region" description="Helical" evidence="1 3">
    <location>
        <begin position="1037"/>
        <end position="1054"/>
    </location>
</feature>
<feature type="transmembrane region" description="Helical" evidence="1 3">
    <location>
        <begin position="1147"/>
        <end position="1167"/>
    </location>
</feature>
<feature type="domain" description="ABC transmembrane type-1 1" evidence="3">
    <location>
        <begin position="326"/>
        <end position="599"/>
    </location>
</feature>
<feature type="domain" description="ABC transporter 1" evidence="2">
    <location>
        <begin position="645"/>
        <end position="871"/>
    </location>
</feature>
<feature type="domain" description="ABC transmembrane type-1 2" evidence="3">
    <location>
        <begin position="920"/>
        <end position="1209"/>
    </location>
</feature>
<feature type="domain" description="ABC transporter 2" evidence="2">
    <location>
        <begin position="1297"/>
        <end position="1545"/>
    </location>
</feature>
<feature type="region of interest" description="Disordered" evidence="5">
    <location>
        <begin position="853"/>
        <end position="899"/>
    </location>
</feature>
<feature type="region of interest" description="Disordered" evidence="5">
    <location>
        <begin position="1229"/>
        <end position="1298"/>
    </location>
</feature>
<feature type="compositionally biased region" description="Basic and acidic residues" evidence="5">
    <location>
        <begin position="1229"/>
        <end position="1238"/>
    </location>
</feature>
<feature type="compositionally biased region" description="Acidic residues" evidence="5">
    <location>
        <begin position="1269"/>
        <end position="1280"/>
    </location>
</feature>
<feature type="binding site" evidence="2">
    <location>
        <begin position="678"/>
        <end position="685"/>
    </location>
    <ligand>
        <name>ATP</name>
        <dbReference type="ChEBI" id="CHEBI:30616"/>
    </ligand>
</feature>
<feature type="binding site" evidence="2">
    <location>
        <begin position="1333"/>
        <end position="1340"/>
    </location>
    <ligand>
        <name>ATP</name>
        <dbReference type="ChEBI" id="CHEBI:30616"/>
    </ligand>
</feature>
<feature type="glycosylation site" description="N-linked (GlcNAc...) asparagine" evidence="4">
    <location>
        <position position="384"/>
    </location>
</feature>
<feature type="glycosylation site" description="N-linked (GlcNAc...) asparagine" evidence="4">
    <location>
        <position position="647"/>
    </location>
</feature>
<feature type="glycosylation site" description="N-linked (GlcNAc...) asparagine" evidence="4">
    <location>
        <position position="721"/>
    </location>
</feature>
<feature type="glycosylation site" description="N-linked (GlcNAc...) asparagine" evidence="4">
    <location>
        <position position="1189"/>
    </location>
</feature>
<feature type="glycosylation site" description="N-linked (GlcNAc...) asparagine" evidence="4">
    <location>
        <position position="1496"/>
    </location>
</feature>
<accession>A0A142I732</accession>
<evidence type="ECO:0000255" key="1"/>
<evidence type="ECO:0000255" key="2">
    <source>
        <dbReference type="PROSITE-ProRule" id="PRU00434"/>
    </source>
</evidence>
<evidence type="ECO:0000255" key="3">
    <source>
        <dbReference type="PROSITE-ProRule" id="PRU00441"/>
    </source>
</evidence>
<evidence type="ECO:0000255" key="4">
    <source>
        <dbReference type="PROSITE-ProRule" id="PRU00498"/>
    </source>
</evidence>
<evidence type="ECO:0000256" key="5">
    <source>
        <dbReference type="SAM" id="MobiDB-lite"/>
    </source>
</evidence>
<evidence type="ECO:0000269" key="6">
    <source>
    </source>
</evidence>
<evidence type="ECO:0000269" key="7">
    <source>
    </source>
</evidence>
<evidence type="ECO:0000303" key="8">
    <source>
    </source>
</evidence>
<evidence type="ECO:0000303" key="9">
    <source>
    </source>
</evidence>
<evidence type="ECO:0000305" key="10"/>